<dbReference type="EMBL" id="AF353093">
    <property type="protein sequence ID" value="AAK43835.1"/>
    <property type="molecule type" value="mRNA"/>
</dbReference>
<dbReference type="EMBL" id="AY598452">
    <property type="protein sequence ID" value="AAT09418.1"/>
    <property type="molecule type" value="mRNA"/>
</dbReference>
<dbReference type="EMBL" id="AC023754">
    <property type="protein sequence ID" value="AAG13065.1"/>
    <property type="molecule type" value="Genomic_DNA"/>
</dbReference>
<dbReference type="EMBL" id="CP002684">
    <property type="protein sequence ID" value="AEE35716.1"/>
    <property type="molecule type" value="Genomic_DNA"/>
</dbReference>
<dbReference type="EMBL" id="CP002684">
    <property type="protein sequence ID" value="AEE35717.1"/>
    <property type="molecule type" value="Genomic_DNA"/>
</dbReference>
<dbReference type="EMBL" id="AY062545">
    <property type="protein sequence ID" value="AAL32623.1"/>
    <property type="molecule type" value="mRNA"/>
</dbReference>
<dbReference type="EMBL" id="BT000133">
    <property type="protein sequence ID" value="AAN15452.1"/>
    <property type="molecule type" value="mRNA"/>
</dbReference>
<dbReference type="EMBL" id="AY085278">
    <property type="protein sequence ID" value="AAM62510.1"/>
    <property type="molecule type" value="mRNA"/>
</dbReference>
<dbReference type="EMBL" id="AK226561">
    <property type="protein sequence ID" value="BAE98691.1"/>
    <property type="molecule type" value="mRNA"/>
</dbReference>
<dbReference type="PIR" id="F96784">
    <property type="entry name" value="F96784"/>
</dbReference>
<dbReference type="RefSeq" id="NP_001077827.1">
    <property type="nucleotide sequence ID" value="NM_001084358.2"/>
</dbReference>
<dbReference type="RefSeq" id="NP_177674.1">
    <property type="nucleotide sequence ID" value="NM_106195.5"/>
</dbReference>
<dbReference type="SMR" id="Q9FWS9"/>
<dbReference type="BioGRID" id="29096">
    <property type="interactions" value="25"/>
</dbReference>
<dbReference type="FunCoup" id="Q9FWS9">
    <property type="interactions" value="287"/>
</dbReference>
<dbReference type="IntAct" id="Q9FWS9">
    <property type="interactions" value="22"/>
</dbReference>
<dbReference type="STRING" id="3702.Q9FWS9"/>
<dbReference type="iPTMnet" id="Q9FWS9"/>
<dbReference type="PaxDb" id="3702-AT1G75410.2"/>
<dbReference type="ProteomicsDB" id="222814"/>
<dbReference type="EnsemblPlants" id="AT1G75410.1">
    <property type="protein sequence ID" value="AT1G75410.1"/>
    <property type="gene ID" value="AT1G75410"/>
</dbReference>
<dbReference type="EnsemblPlants" id="AT1G75410.2">
    <property type="protein sequence ID" value="AT1G75410.2"/>
    <property type="gene ID" value="AT1G75410"/>
</dbReference>
<dbReference type="GeneID" id="843877"/>
<dbReference type="Gramene" id="AT1G75410.1">
    <property type="protein sequence ID" value="AT1G75410.1"/>
    <property type="gene ID" value="AT1G75410"/>
</dbReference>
<dbReference type="Gramene" id="AT1G75410.2">
    <property type="protein sequence ID" value="AT1G75410.2"/>
    <property type="gene ID" value="AT1G75410"/>
</dbReference>
<dbReference type="KEGG" id="ath:AT1G75410"/>
<dbReference type="Araport" id="AT1G75410"/>
<dbReference type="TAIR" id="AT1G75410">
    <property type="gene designation" value="BLH3"/>
</dbReference>
<dbReference type="eggNOG" id="KOG0773">
    <property type="taxonomic scope" value="Eukaryota"/>
</dbReference>
<dbReference type="HOGENOM" id="CLU_011058_6_1_1"/>
<dbReference type="InParanoid" id="Q9FWS9"/>
<dbReference type="PhylomeDB" id="Q9FWS9"/>
<dbReference type="PRO" id="PR:Q9FWS9"/>
<dbReference type="Proteomes" id="UP000006548">
    <property type="component" value="Chromosome 1"/>
</dbReference>
<dbReference type="ExpressionAtlas" id="Q9FWS9">
    <property type="expression patterns" value="baseline and differential"/>
</dbReference>
<dbReference type="GO" id="GO:0005634">
    <property type="term" value="C:nucleus"/>
    <property type="evidence" value="ECO:0000314"/>
    <property type="project" value="TAIR"/>
</dbReference>
<dbReference type="GO" id="GO:0003700">
    <property type="term" value="F:DNA-binding transcription factor activity"/>
    <property type="evidence" value="ECO:0000250"/>
    <property type="project" value="TAIR"/>
</dbReference>
<dbReference type="GO" id="GO:0000976">
    <property type="term" value="F:transcription cis-regulatory region binding"/>
    <property type="evidence" value="ECO:0000353"/>
    <property type="project" value="TAIR"/>
</dbReference>
<dbReference type="GO" id="GO:0048510">
    <property type="term" value="P:regulation of timing of transition from vegetative to reproductive phase"/>
    <property type="evidence" value="ECO:0000315"/>
    <property type="project" value="TAIR"/>
</dbReference>
<dbReference type="CDD" id="cd00086">
    <property type="entry name" value="homeodomain"/>
    <property type="match status" value="1"/>
</dbReference>
<dbReference type="Gene3D" id="1.10.10.60">
    <property type="entry name" value="Homeodomain-like"/>
    <property type="match status" value="1"/>
</dbReference>
<dbReference type="InterPro" id="IPR001356">
    <property type="entry name" value="HD"/>
</dbReference>
<dbReference type="InterPro" id="IPR009057">
    <property type="entry name" value="Homeodomain-like_sf"/>
</dbReference>
<dbReference type="InterPro" id="IPR008422">
    <property type="entry name" value="KN_HD"/>
</dbReference>
<dbReference type="InterPro" id="IPR006563">
    <property type="entry name" value="POX_dom"/>
</dbReference>
<dbReference type="InterPro" id="IPR050224">
    <property type="entry name" value="TALE_homeobox"/>
</dbReference>
<dbReference type="PANTHER" id="PTHR11850">
    <property type="entry name" value="HOMEOBOX PROTEIN TRANSCRIPTION FACTORS"/>
    <property type="match status" value="1"/>
</dbReference>
<dbReference type="Pfam" id="PF05920">
    <property type="entry name" value="Homeobox_KN"/>
    <property type="match status" value="1"/>
</dbReference>
<dbReference type="Pfam" id="PF07526">
    <property type="entry name" value="POX"/>
    <property type="match status" value="1"/>
</dbReference>
<dbReference type="SMART" id="SM00389">
    <property type="entry name" value="HOX"/>
    <property type="match status" value="1"/>
</dbReference>
<dbReference type="SMART" id="SM00574">
    <property type="entry name" value="POX"/>
    <property type="match status" value="1"/>
</dbReference>
<dbReference type="SUPFAM" id="SSF46689">
    <property type="entry name" value="Homeodomain-like"/>
    <property type="match status" value="1"/>
</dbReference>
<dbReference type="PROSITE" id="PS00027">
    <property type="entry name" value="HOMEOBOX_1"/>
    <property type="match status" value="1"/>
</dbReference>
<dbReference type="PROSITE" id="PS50071">
    <property type="entry name" value="HOMEOBOX_2"/>
    <property type="match status" value="1"/>
</dbReference>
<proteinExistence type="evidence at protein level"/>
<keyword id="KW-0238">DNA-binding</keyword>
<keyword id="KW-0371">Homeobox</keyword>
<keyword id="KW-0539">Nucleus</keyword>
<keyword id="KW-1185">Reference proteome</keyword>
<keyword id="KW-0804">Transcription</keyword>
<keyword id="KW-0805">Transcription regulation</keyword>
<protein>
    <recommendedName>
        <fullName>BEL1-like homeodomain protein 3</fullName>
        <shortName>BEL1-like protein 3</shortName>
    </recommendedName>
</protein>
<organism>
    <name type="scientific">Arabidopsis thaliana</name>
    <name type="common">Mouse-ear cress</name>
    <dbReference type="NCBI Taxonomy" id="3702"/>
    <lineage>
        <taxon>Eukaryota</taxon>
        <taxon>Viridiplantae</taxon>
        <taxon>Streptophyta</taxon>
        <taxon>Embryophyta</taxon>
        <taxon>Tracheophyta</taxon>
        <taxon>Spermatophyta</taxon>
        <taxon>Magnoliopsida</taxon>
        <taxon>eudicotyledons</taxon>
        <taxon>Gunneridae</taxon>
        <taxon>Pentapetalae</taxon>
        <taxon>rosids</taxon>
        <taxon>malvids</taxon>
        <taxon>Brassicales</taxon>
        <taxon>Brassicaceae</taxon>
        <taxon>Camelineae</taxon>
        <taxon>Arabidopsis</taxon>
    </lineage>
</organism>
<reference key="1">
    <citation type="submission" date="2001-02" db="EMBL/GenBank/DDBJ databases">
        <title>A family of BEL1-like homeodomain (BLH) proteins in Arabidopsis thaliana.</title>
        <authorList>
            <person name="Pidkowich M.S."/>
            <person name="Samach A."/>
            <person name="Modrusan Z."/>
            <person name="Haughn G.W."/>
        </authorList>
    </citation>
    <scope>NUCLEOTIDE SEQUENCE [MRNA]</scope>
</reference>
<reference key="2">
    <citation type="submission" date="2004-04" db="EMBL/GenBank/DDBJ databases">
        <title>The BELL family of homeodomain proteins in Arabidopsis.</title>
        <authorList>
            <person name="Milich R.J."/>
            <person name="Putterill J.J."/>
        </authorList>
    </citation>
    <scope>NUCLEOTIDE SEQUENCE [MRNA]</scope>
</reference>
<reference key="3">
    <citation type="journal article" date="2000" name="Nature">
        <title>Sequence and analysis of chromosome 1 of the plant Arabidopsis thaliana.</title>
        <authorList>
            <person name="Theologis A."/>
            <person name="Ecker J.R."/>
            <person name="Palm C.J."/>
            <person name="Federspiel N.A."/>
            <person name="Kaul S."/>
            <person name="White O."/>
            <person name="Alonso J."/>
            <person name="Altafi H."/>
            <person name="Araujo R."/>
            <person name="Bowman C.L."/>
            <person name="Brooks S.Y."/>
            <person name="Buehler E."/>
            <person name="Chan A."/>
            <person name="Chao Q."/>
            <person name="Chen H."/>
            <person name="Cheuk R.F."/>
            <person name="Chin C.W."/>
            <person name="Chung M.K."/>
            <person name="Conn L."/>
            <person name="Conway A.B."/>
            <person name="Conway A.R."/>
            <person name="Creasy T.H."/>
            <person name="Dewar K."/>
            <person name="Dunn P."/>
            <person name="Etgu P."/>
            <person name="Feldblyum T.V."/>
            <person name="Feng J.-D."/>
            <person name="Fong B."/>
            <person name="Fujii C.Y."/>
            <person name="Gill J.E."/>
            <person name="Goldsmith A.D."/>
            <person name="Haas B."/>
            <person name="Hansen N.F."/>
            <person name="Hughes B."/>
            <person name="Huizar L."/>
            <person name="Hunter J.L."/>
            <person name="Jenkins J."/>
            <person name="Johnson-Hopson C."/>
            <person name="Khan S."/>
            <person name="Khaykin E."/>
            <person name="Kim C.J."/>
            <person name="Koo H.L."/>
            <person name="Kremenetskaia I."/>
            <person name="Kurtz D.B."/>
            <person name="Kwan A."/>
            <person name="Lam B."/>
            <person name="Langin-Hooper S."/>
            <person name="Lee A."/>
            <person name="Lee J.M."/>
            <person name="Lenz C.A."/>
            <person name="Li J.H."/>
            <person name="Li Y.-P."/>
            <person name="Lin X."/>
            <person name="Liu S.X."/>
            <person name="Liu Z.A."/>
            <person name="Luros J.S."/>
            <person name="Maiti R."/>
            <person name="Marziali A."/>
            <person name="Militscher J."/>
            <person name="Miranda M."/>
            <person name="Nguyen M."/>
            <person name="Nierman W.C."/>
            <person name="Osborne B.I."/>
            <person name="Pai G."/>
            <person name="Peterson J."/>
            <person name="Pham P.K."/>
            <person name="Rizzo M."/>
            <person name="Rooney T."/>
            <person name="Rowley D."/>
            <person name="Sakano H."/>
            <person name="Salzberg S.L."/>
            <person name="Schwartz J.R."/>
            <person name="Shinn P."/>
            <person name="Southwick A.M."/>
            <person name="Sun H."/>
            <person name="Tallon L.J."/>
            <person name="Tambunga G."/>
            <person name="Toriumi M.J."/>
            <person name="Town C.D."/>
            <person name="Utterback T."/>
            <person name="Van Aken S."/>
            <person name="Vaysberg M."/>
            <person name="Vysotskaia V.S."/>
            <person name="Walker M."/>
            <person name="Wu D."/>
            <person name="Yu G."/>
            <person name="Fraser C.M."/>
            <person name="Venter J.C."/>
            <person name="Davis R.W."/>
        </authorList>
    </citation>
    <scope>NUCLEOTIDE SEQUENCE [LARGE SCALE GENOMIC DNA]</scope>
    <source>
        <strain>cv. Columbia</strain>
    </source>
</reference>
<reference key="4">
    <citation type="journal article" date="2017" name="Plant J.">
        <title>Araport11: a complete reannotation of the Arabidopsis thaliana reference genome.</title>
        <authorList>
            <person name="Cheng C.Y."/>
            <person name="Krishnakumar V."/>
            <person name="Chan A.P."/>
            <person name="Thibaud-Nissen F."/>
            <person name="Schobel S."/>
            <person name="Town C.D."/>
        </authorList>
    </citation>
    <scope>GENOME REANNOTATION</scope>
    <source>
        <strain>cv. Columbia</strain>
    </source>
</reference>
<reference key="5">
    <citation type="journal article" date="2003" name="Science">
        <title>Empirical analysis of transcriptional activity in the Arabidopsis genome.</title>
        <authorList>
            <person name="Yamada K."/>
            <person name="Lim J."/>
            <person name="Dale J.M."/>
            <person name="Chen H."/>
            <person name="Shinn P."/>
            <person name="Palm C.J."/>
            <person name="Southwick A.M."/>
            <person name="Wu H.C."/>
            <person name="Kim C.J."/>
            <person name="Nguyen M."/>
            <person name="Pham P.K."/>
            <person name="Cheuk R.F."/>
            <person name="Karlin-Newmann G."/>
            <person name="Liu S.X."/>
            <person name="Lam B."/>
            <person name="Sakano H."/>
            <person name="Wu T."/>
            <person name="Yu G."/>
            <person name="Miranda M."/>
            <person name="Quach H.L."/>
            <person name="Tripp M."/>
            <person name="Chang C.H."/>
            <person name="Lee J.M."/>
            <person name="Toriumi M.J."/>
            <person name="Chan M.M."/>
            <person name="Tang C.C."/>
            <person name="Onodera C.S."/>
            <person name="Deng J.M."/>
            <person name="Akiyama K."/>
            <person name="Ansari Y."/>
            <person name="Arakawa T."/>
            <person name="Banh J."/>
            <person name="Banno F."/>
            <person name="Bowser L."/>
            <person name="Brooks S.Y."/>
            <person name="Carninci P."/>
            <person name="Chao Q."/>
            <person name="Choy N."/>
            <person name="Enju A."/>
            <person name="Goldsmith A.D."/>
            <person name="Gurjal M."/>
            <person name="Hansen N.F."/>
            <person name="Hayashizaki Y."/>
            <person name="Johnson-Hopson C."/>
            <person name="Hsuan V.W."/>
            <person name="Iida K."/>
            <person name="Karnes M."/>
            <person name="Khan S."/>
            <person name="Koesema E."/>
            <person name="Ishida J."/>
            <person name="Jiang P.X."/>
            <person name="Jones T."/>
            <person name="Kawai J."/>
            <person name="Kamiya A."/>
            <person name="Meyers C."/>
            <person name="Nakajima M."/>
            <person name="Narusaka M."/>
            <person name="Seki M."/>
            <person name="Sakurai T."/>
            <person name="Satou M."/>
            <person name="Tamse R."/>
            <person name="Vaysberg M."/>
            <person name="Wallender E.K."/>
            <person name="Wong C."/>
            <person name="Yamamura Y."/>
            <person name="Yuan S."/>
            <person name="Shinozaki K."/>
            <person name="Davis R.W."/>
            <person name="Theologis A."/>
            <person name="Ecker J.R."/>
        </authorList>
    </citation>
    <scope>NUCLEOTIDE SEQUENCE [LARGE SCALE MRNA]</scope>
    <source>
        <strain>cv. Columbia</strain>
    </source>
</reference>
<reference key="6">
    <citation type="submission" date="2002-03" db="EMBL/GenBank/DDBJ databases">
        <title>Full-length cDNA from Arabidopsis thaliana.</title>
        <authorList>
            <person name="Brover V.V."/>
            <person name="Troukhan M.E."/>
            <person name="Alexandrov N.A."/>
            <person name="Lu Y.-P."/>
            <person name="Flavell R.B."/>
            <person name="Feldmann K.A."/>
        </authorList>
    </citation>
    <scope>NUCLEOTIDE SEQUENCE [LARGE SCALE MRNA]</scope>
</reference>
<reference key="7">
    <citation type="submission" date="2006-07" db="EMBL/GenBank/DDBJ databases">
        <title>Large-scale analysis of RIKEN Arabidopsis full-length (RAFL) cDNAs.</title>
        <authorList>
            <person name="Totoki Y."/>
            <person name="Seki M."/>
            <person name="Ishida J."/>
            <person name="Nakajima M."/>
            <person name="Enju A."/>
            <person name="Kamiya A."/>
            <person name="Narusaka M."/>
            <person name="Shin-i T."/>
            <person name="Nakagawa M."/>
            <person name="Sakamoto N."/>
            <person name="Oishi K."/>
            <person name="Kohara Y."/>
            <person name="Kobayashi M."/>
            <person name="Toyoda A."/>
            <person name="Sakaki Y."/>
            <person name="Sakurai T."/>
            <person name="Iida K."/>
            <person name="Akiyama K."/>
            <person name="Satou M."/>
            <person name="Toyoda T."/>
            <person name="Konagaya A."/>
            <person name="Carninci P."/>
            <person name="Kawai J."/>
            <person name="Hayashizaki Y."/>
            <person name="Shinozaki K."/>
        </authorList>
    </citation>
    <scope>NUCLEOTIDE SEQUENCE [LARGE SCALE MRNA] OF 1-431</scope>
    <source>
        <strain>cv. Columbia</strain>
    </source>
</reference>
<reference key="8">
    <citation type="journal article" date="2004" name="Curr. Biol.">
        <title>Competence to respond to floral inductive signals requires the homeobox genes PENNYWISE and POUND-FOOLISH.</title>
        <authorList>
            <person name="Smith H.M.S."/>
            <person name="Campbell B.C.C."/>
            <person name="Hake S."/>
        </authorList>
    </citation>
    <scope>GENE FAMILY ORGANIZATION</scope>
</reference>
<reference key="9">
    <citation type="journal article" date="2005" name="Proc. Natl. Acad. Sci. U.S.A.">
        <title>A central role of Arabidopsis thaliana ovate family proteins in networking and subcellular localization of 3-aa loop extension homeodomain proteins.</title>
        <authorList>
            <person name="Hackbusch J."/>
            <person name="Richter K."/>
            <person name="Muller J."/>
            <person name="Salamini F."/>
            <person name="Uhrig J.F."/>
        </authorList>
    </citation>
    <scope>INTERACTION WITH OFP1; OFP2; OFP3; OFP4; OFP5 AND OFP15</scope>
</reference>
<reference key="10">
    <citation type="journal article" date="2006" name="Nucleic Acids Res.">
        <title>Nuclear import of the transcription factor SHOOT MERISTEMLESS depends on heterodimerization with BLH proteins expressed in discrete sub-domains of the shoot apical meristem of Arabidopsis thaliana.</title>
        <authorList>
            <person name="Cole M."/>
            <person name="Nolte C."/>
            <person name="Werr W."/>
        </authorList>
    </citation>
    <scope>FUNCTION</scope>
    <scope>INTERACTION WITH STM</scope>
</reference>
<accession>Q9FWS9</accession>
<accession>Q0WW07</accession>
<accession>Q8W4I2</accession>
<name>BLH3_ARATH</name>
<comment type="function">
    <text evidence="4">Transcription factor that is responsive of the nuclear import of SHOOT MERISTEMLESS (STM).</text>
</comment>
<comment type="subunit">
    <text evidence="3 4">May form heterodimeric complex with the TALE/KNOX protein STM. Interacts with OFP1, OFP2, OFP3, OFP4, OFP5 and OFP15.</text>
</comment>
<comment type="interaction">
    <interactant intactId="EBI-912915">
        <id>Q9FWS9</id>
    </interactant>
    <interactant intactId="EBI-1153908">
        <id>P48000</id>
        <label>KNAT3</label>
    </interactant>
    <organismsDiffer>false</organismsDiffer>
    <experiments>3</experiments>
</comment>
<comment type="interaction">
    <interactant intactId="EBI-912915">
        <id>Q9FWS9</id>
    </interactant>
    <interactant intactId="EBI-530523">
        <id>Q38874</id>
        <label>STM</label>
    </interactant>
    <organismsDiffer>false</organismsDiffer>
    <experiments>4</experiments>
</comment>
<comment type="subcellular location">
    <subcellularLocation>
        <location evidence="5">Nucleus</location>
    </subcellularLocation>
</comment>
<comment type="domain">
    <text>The SR/KY and BELL domains are responsive for the interaction between the TALE/BELL proteins and the TALE/KNOX proteins.</text>
</comment>
<comment type="similarity">
    <text evidence="5">Belongs to the TALE/BELL homeobox family.</text>
</comment>
<feature type="chain" id="PRO_0000315459" description="BEL1-like homeodomain protein 3">
    <location>
        <begin position="1"/>
        <end position="524"/>
    </location>
</feature>
<feature type="DNA-binding region" description="Homeobox" evidence="1">
    <location>
        <begin position="346"/>
        <end position="408"/>
    </location>
</feature>
<feature type="region of interest" description="SR/KY domain">
    <location>
        <begin position="171"/>
        <end position="187"/>
    </location>
</feature>
<feature type="region of interest" description="Disordered" evidence="2">
    <location>
        <begin position="195"/>
        <end position="236"/>
    </location>
</feature>
<feature type="region of interest" description="BELL domain">
    <location>
        <begin position="229"/>
        <end position="300"/>
    </location>
</feature>
<feature type="region of interest" description="Disordered" evidence="2">
    <location>
        <begin position="429"/>
        <end position="463"/>
    </location>
</feature>
<feature type="compositionally biased region" description="Basic and acidic residues" evidence="2">
    <location>
        <begin position="195"/>
        <end position="205"/>
    </location>
</feature>
<feature type="compositionally biased region" description="Basic and acidic residues" evidence="2">
    <location>
        <begin position="216"/>
        <end position="235"/>
    </location>
</feature>
<feature type="compositionally biased region" description="Basic and acidic residues" evidence="2">
    <location>
        <begin position="430"/>
        <end position="445"/>
    </location>
</feature>
<feature type="compositionally biased region" description="Low complexity" evidence="2">
    <location>
        <begin position="446"/>
        <end position="459"/>
    </location>
</feature>
<feature type="sequence conflict" description="In Ref. 5; AAL32623/AAN15452." evidence="5" ref="5">
    <original>V</original>
    <variation>L</variation>
    <location>
        <position position="61"/>
    </location>
</feature>
<gene>
    <name type="primary">BLH3</name>
    <name type="ordered locus">At1g75410</name>
    <name type="ORF">F1B16.6</name>
</gene>
<sequence length="524" mass="59679">MAVYYPNSVGMQSLYQESIYLNEQQQQQQQASSSSAASFSEIVSGDVRNNEMVFIPPTSDVAVNGNVTVSSNDLSFHGGGLSLSLGNQIQSAVSVSPFQYHYQNLSNQLSYNNLNPSTMSDENGKSLSVHQHHSDQILPSSVYNNNGNNGVGFYNNYRYETSGFVSSVLRSRYLKPTQQLLDEVVSVRKDLKLGNKKMKNDKGQDFHNGSSDNITEDDKSQSQELSPSERQELQSKKSKLLTMVDEVDKRYNQYHHQMEALASSFEMVTGLGAAKPYTSVALNRISRHFRCLRDAIKEQIQVIRGKLGERETSDEQGERIPRLRYLDQRLRQQRALHQQLGMVRPAWRPQRGLPENSVSILRAWLFEHFLHPYPKESEKIMLSKQTGLSKNQVANWFINARVRLWKPMIEEMYKEEFGESAELLSNSNQDTKKMQETSQLKHEDSSSSQQQNQGNNNNNIPYTSDAEQNLVFADPKPDRATTGDYDSLMNYHGFGIDDYNRYVGLGNQQDGRYSNPHQLHDFVV</sequence>
<evidence type="ECO:0000255" key="1">
    <source>
        <dbReference type="PROSITE-ProRule" id="PRU00108"/>
    </source>
</evidence>
<evidence type="ECO:0000256" key="2">
    <source>
        <dbReference type="SAM" id="MobiDB-lite"/>
    </source>
</evidence>
<evidence type="ECO:0000269" key="3">
    <source>
    </source>
</evidence>
<evidence type="ECO:0000269" key="4">
    <source>
    </source>
</evidence>
<evidence type="ECO:0000305" key="5"/>